<proteinExistence type="evidence at protein level"/>
<comment type="function">
    <text evidence="2 5">Involved in cellular response to chemical stress and may contribute to resistance toward antimicrobial natural compounds as well as drugs (Probable). Catalyzes the methylation and detoxification of the P.aeruginosa toxin 2-heptyl-1-hydroxy-4(1H)-quinolinone (HQNO) to 2-heptyl-1-methoxy-4(1H)-quinolinone (HMOQ) (PubMed:33064871). Can also methylate 3-bromo-2-heptyl-1-hydroxy-4(1H)-quinolinone, and shows much lower activity with 1-hydroxyquinolin-4(1H)-one, quercetin, 4-hydroxyquinolin-2(1H)-one (DHQ) and 4-hydroxyisoquinolin-1(2H)-one (PubMed:33064871).</text>
</comment>
<comment type="catalytic activity">
    <reaction evidence="2">
        <text>2-heptyl-1-hydroxy-4(1H)-quinolinone + S-adenosyl-L-methionine = 2-heptyl-1-methoxy-4(1H)-quinolinone + S-adenosyl-L-homocysteine + H(+)</text>
        <dbReference type="Rhea" id="RHEA:65924"/>
        <dbReference type="ChEBI" id="CHEBI:15378"/>
        <dbReference type="ChEBI" id="CHEBI:57856"/>
        <dbReference type="ChEBI" id="CHEBI:59789"/>
        <dbReference type="ChEBI" id="CHEBI:157768"/>
        <dbReference type="ChEBI" id="CHEBI:157769"/>
        <dbReference type="EC" id="2.1.1.374"/>
    </reaction>
    <physiologicalReaction direction="left-to-right" evidence="2">
        <dbReference type="Rhea" id="RHEA:65925"/>
    </physiologicalReaction>
</comment>
<comment type="catalytic activity">
    <reaction evidence="2">
        <text>3-bromo-2-heptyl-1-hydroxy-4(1H)-quinolinone + S-adenosyl-L-methionine = 3-bromo-2-heptyl-1-methoxy-4(1H)-quinolinone + S-adenosyl-L-homocysteine + H(+)</text>
        <dbReference type="Rhea" id="RHEA:65928"/>
        <dbReference type="ChEBI" id="CHEBI:15378"/>
        <dbReference type="ChEBI" id="CHEBI:57856"/>
        <dbReference type="ChEBI" id="CHEBI:59789"/>
        <dbReference type="ChEBI" id="CHEBI:157778"/>
        <dbReference type="ChEBI" id="CHEBI:157779"/>
        <dbReference type="EC" id="2.1.1.374"/>
    </reaction>
    <physiologicalReaction direction="left-to-right" evidence="2">
        <dbReference type="Rhea" id="RHEA:65929"/>
    </physiologicalReaction>
</comment>
<comment type="biophysicochemical properties">
    <kinetics>
        <KM evidence="2">9.8 uM for HQNO</KM>
        <text evidence="2">kcat is 2.0 sec(-1) with HQNO as substrate.</text>
    </kinetics>
</comment>
<comment type="subunit">
    <text evidence="2">Monomer.</text>
</comment>
<comment type="subcellular location">
    <subcellularLocation>
        <location evidence="1">Cytoplasm</location>
    </subcellularLocation>
</comment>
<comment type="similarity">
    <text evidence="4">Belongs to the methyltransferase superfamily.</text>
</comment>
<organism>
    <name type="scientific">Mycobacteroides abscessus (strain ATCC 19977 / DSM 44196 / CCUG 20993 / CIP 104536 / JCM 13569 / NCTC 13031 / TMC 1543 / L948)</name>
    <name type="common">Mycobacterium abscessus</name>
    <dbReference type="NCBI Taxonomy" id="561007"/>
    <lineage>
        <taxon>Bacteria</taxon>
        <taxon>Bacillati</taxon>
        <taxon>Actinomycetota</taxon>
        <taxon>Actinomycetes</taxon>
        <taxon>Mycobacteriales</taxon>
        <taxon>Mycobacteriaceae</taxon>
        <taxon>Mycobacteroides</taxon>
        <taxon>Mycobacteroides abscessus</taxon>
    </lineage>
</organism>
<sequence>MTENLQDMFESSYRGEAPEQLAARPPWSIGQPQPEILKLIEQGKVHGDVLDAGCGEAATALYLAERGHTAVGLDAAPTAIQLAKGYAAERGLTNVTFDVADISNFTGYDGRFGTIIDSTLFHSMPVELREGYQQSIVRAAAPGANYIVLVFDKAAFPPDIDGPHPVSEPELREIVSKYWTVDDISPARLYANGDGFQDGGAQRFAEFREESNGWVSMAGWLLQAHRD</sequence>
<evidence type="ECO:0000250" key="1">
    <source>
        <dbReference type="UniProtKB" id="A5TZU0"/>
    </source>
</evidence>
<evidence type="ECO:0000269" key="2">
    <source>
    </source>
</evidence>
<evidence type="ECO:0000303" key="3">
    <source>
    </source>
</evidence>
<evidence type="ECO:0000305" key="4"/>
<evidence type="ECO:0000305" key="5">
    <source>
    </source>
</evidence>
<evidence type="ECO:0000312" key="6">
    <source>
        <dbReference type="EMBL" id="CAM62913.1"/>
    </source>
</evidence>
<name>HTM_MYCA9</name>
<dbReference type="EC" id="2.1.1.374" evidence="2"/>
<dbReference type="EMBL" id="CU458896">
    <property type="protein sequence ID" value="CAM62913.1"/>
    <property type="molecule type" value="Genomic_DNA"/>
</dbReference>
<dbReference type="RefSeq" id="WP_005082352.1">
    <property type="nucleotide sequence ID" value="NZ_MLCG01000003.1"/>
</dbReference>
<dbReference type="SMR" id="B1MCE2"/>
<dbReference type="GeneID" id="93379765"/>
<dbReference type="KEGG" id="mab:MAB_2834c"/>
<dbReference type="BRENDA" id="2.1.1.374">
    <property type="organism ID" value="8960"/>
</dbReference>
<dbReference type="SABIO-RK" id="B1MCE2"/>
<dbReference type="Proteomes" id="UP000007137">
    <property type="component" value="Chromosome"/>
</dbReference>
<dbReference type="GO" id="GO:0005737">
    <property type="term" value="C:cytoplasm"/>
    <property type="evidence" value="ECO:0007669"/>
    <property type="project" value="UniProtKB-SubCell"/>
</dbReference>
<dbReference type="GO" id="GO:0008168">
    <property type="term" value="F:methyltransferase activity"/>
    <property type="evidence" value="ECO:0007669"/>
    <property type="project" value="UniProtKB-KW"/>
</dbReference>
<dbReference type="GO" id="GO:0032259">
    <property type="term" value="P:methylation"/>
    <property type="evidence" value="ECO:0007669"/>
    <property type="project" value="UniProtKB-KW"/>
</dbReference>
<dbReference type="CDD" id="cd02440">
    <property type="entry name" value="AdoMet_MTases"/>
    <property type="match status" value="1"/>
</dbReference>
<dbReference type="Gene3D" id="3.40.50.150">
    <property type="entry name" value="Vaccinia Virus protein VP39"/>
    <property type="match status" value="1"/>
</dbReference>
<dbReference type="InterPro" id="IPR025714">
    <property type="entry name" value="Methyltranfer_dom"/>
</dbReference>
<dbReference type="InterPro" id="IPR029063">
    <property type="entry name" value="SAM-dependent_MTases_sf"/>
</dbReference>
<dbReference type="PANTHER" id="PTHR32183">
    <property type="match status" value="1"/>
</dbReference>
<dbReference type="PANTHER" id="PTHR32183:SF6">
    <property type="entry name" value="CYSTEINE SULFINATE DESULFINASE_CYSTEINE DESULFURASE AND RELATED ENZYMES"/>
    <property type="match status" value="1"/>
</dbReference>
<dbReference type="Pfam" id="PF13847">
    <property type="entry name" value="Methyltransf_31"/>
    <property type="match status" value="1"/>
</dbReference>
<dbReference type="SUPFAM" id="SSF53335">
    <property type="entry name" value="S-adenosyl-L-methionine-dependent methyltransferases"/>
    <property type="match status" value="1"/>
</dbReference>
<keyword id="KW-0963">Cytoplasm</keyword>
<keyword id="KW-0489">Methyltransferase</keyword>
<keyword id="KW-1185">Reference proteome</keyword>
<keyword id="KW-0949">S-adenosyl-L-methionine</keyword>
<keyword id="KW-0808">Transferase</keyword>
<reference key="1">
    <citation type="journal article" date="2009" name="PLoS ONE">
        <title>Non mycobacterial virulence genes in the genome of the emerging pathogen Mycobacterium abscessus.</title>
        <authorList>
            <person name="Ripoll F."/>
            <person name="Pasek S."/>
            <person name="Schenowitz C."/>
            <person name="Dossat C."/>
            <person name="Barbe V."/>
            <person name="Rottman M."/>
            <person name="Macheras E."/>
            <person name="Heym B."/>
            <person name="Herrmann J.L."/>
            <person name="Daffe M."/>
            <person name="Brosch R."/>
            <person name="Risler J.L."/>
            <person name="Gaillard J.L."/>
        </authorList>
    </citation>
    <scope>NUCLEOTIDE SEQUENCE [LARGE SCALE GENOMIC DNA]</scope>
    <source>
        <strain>ATCC 19977 / DSM 44196 / CCUG 20993 / CIP 104536 / JCM 13569 / NCTC 13031 / TMC 1543 / L948</strain>
    </source>
</reference>
<reference key="2">
    <citation type="journal article" date="2021" name="FEBS J.">
        <title>Modification of the Pseudomonas aeruginosa toxin 2-heptyl-1-hydroxyquinolin-4(1H)-one and other secondary metabolites by methyltransferases from mycobacteria.</title>
        <authorList>
            <person name="Sartor P."/>
            <person name="Bock J."/>
            <person name="Hennecke U."/>
            <person name="Thierbach S."/>
            <person name="Fetzner S."/>
        </authorList>
    </citation>
    <scope>FUNCTION</scope>
    <scope>CATALYTIC ACTIVITY</scope>
    <scope>BIOPHYSICOCHEMICAL PROPERTIES</scope>
    <scope>SUBUNIT</scope>
    <source>
        <strain>ATCC 19977 / DSM 44196 / CCUG 20993 / CIP 104536 / JCM 13569 / NCTC 13031 / TMC 1543 / L948</strain>
    </source>
</reference>
<feature type="chain" id="PRO_0000452328" description="2-heptyl-1-hydroxyquinolin-4(1H)-one methyltransferase">
    <location>
        <begin position="1"/>
        <end position="227"/>
    </location>
</feature>
<protein>
    <recommendedName>
        <fullName evidence="4">2-heptyl-1-hydroxyquinolin-4(1H)-one methyltransferase</fullName>
        <shortName evidence="3">HQNO methyltransferase</shortName>
        <shortName evidence="3">HQNO-MTase</shortName>
        <ecNumber evidence="2">2.1.1.374</ecNumber>
    </recommendedName>
    <alternativeName>
        <fullName evidence="3">Heterocyclic toxin methyltransferase</fullName>
    </alternativeName>
</protein>
<accession>B1MCE2</accession>
<gene>
    <name evidence="3" type="primary">htm</name>
    <name evidence="6" type="ordered locus">MAB_2834c</name>
</gene>